<name>IGLC2_HUMAN</name>
<accession>P0DOY2</accession>
<accession>A0A075B6K9</accession>
<accession>A0M8Q4</accession>
<accession>P0CG05</accession>
<accession>P0CG06</accession>
<accession>P80423</accession>
<organism>
    <name type="scientific">Homo sapiens</name>
    <name type="common">Human</name>
    <dbReference type="NCBI Taxonomy" id="9606"/>
    <lineage>
        <taxon>Eukaryota</taxon>
        <taxon>Metazoa</taxon>
        <taxon>Chordata</taxon>
        <taxon>Craniata</taxon>
        <taxon>Vertebrata</taxon>
        <taxon>Euteleostomi</taxon>
        <taxon>Mammalia</taxon>
        <taxon>Eutheria</taxon>
        <taxon>Euarchontoglires</taxon>
        <taxon>Primates</taxon>
        <taxon>Haplorrhini</taxon>
        <taxon>Catarrhini</taxon>
        <taxon>Hominidae</taxon>
        <taxon>Homo</taxon>
    </lineage>
</organism>
<keyword id="KW-0002">3D-structure</keyword>
<keyword id="KW-1064">Adaptive immunity</keyword>
<keyword id="KW-0086">Bence-Jones protein</keyword>
<keyword id="KW-1003">Cell membrane</keyword>
<keyword id="KW-0903">Direct protein sequencing</keyword>
<keyword id="KW-1015">Disulfide bond</keyword>
<keyword id="KW-0391">Immunity</keyword>
<keyword id="KW-1280">Immunoglobulin</keyword>
<keyword id="KW-0393">Immunoglobulin domain</keyword>
<keyword id="KW-0472">Membrane</keyword>
<keyword id="KW-1267">Proteomics identification</keyword>
<keyword id="KW-1185">Reference proteome</keyword>
<keyword id="KW-0964">Secreted</keyword>
<feature type="chain" id="PRO_0000394665" description="Immunoglobulin lambda constant 2">
    <location>
        <begin position="1" status="less than"/>
        <end position="106"/>
    </location>
</feature>
<feature type="domain" description="Ig-like" evidence="1">
    <location>
        <begin position="7"/>
        <end position="101"/>
    </location>
</feature>
<feature type="disulfide bond" evidence="1">
    <location>
        <begin position="28"/>
        <end position="87"/>
    </location>
</feature>
<feature type="disulfide bond" description="Interchain (with heavy chain)" evidence="2">
    <location>
        <position position="105"/>
    </location>
</feature>
<feature type="non-terminal residue">
    <location>
        <position position="1"/>
    </location>
</feature>
<feature type="strand" evidence="15">
    <location>
        <begin position="8"/>
        <end position="12"/>
    </location>
</feature>
<feature type="helix" evidence="15">
    <location>
        <begin position="16"/>
        <end position="20"/>
    </location>
</feature>
<feature type="strand" evidence="15">
    <location>
        <begin position="24"/>
        <end position="36"/>
    </location>
</feature>
<feature type="strand" evidence="15">
    <location>
        <begin position="39"/>
        <end position="44"/>
    </location>
</feature>
<feature type="strand" evidence="15">
    <location>
        <begin position="47"/>
        <end position="49"/>
    </location>
</feature>
<feature type="strand" evidence="15">
    <location>
        <begin position="53"/>
        <end position="55"/>
    </location>
</feature>
<feature type="strand" evidence="16">
    <location>
        <begin position="62"/>
        <end position="64"/>
    </location>
</feature>
<feature type="strand" evidence="15">
    <location>
        <begin position="66"/>
        <end position="74"/>
    </location>
</feature>
<feature type="helix" evidence="15">
    <location>
        <begin position="76"/>
        <end position="81"/>
    </location>
</feature>
<feature type="strand" evidence="15">
    <location>
        <begin position="85"/>
        <end position="91"/>
    </location>
</feature>
<feature type="strand" evidence="15">
    <location>
        <begin position="94"/>
        <end position="100"/>
    </location>
</feature>
<feature type="helix" evidence="14">
    <location>
        <begin position="102"/>
        <end position="104"/>
    </location>
</feature>
<evidence type="ECO:0000255" key="1">
    <source>
        <dbReference type="PROSITE-ProRule" id="PRU00114"/>
    </source>
</evidence>
<evidence type="ECO:0000269" key="2">
    <source>
    </source>
</evidence>
<evidence type="ECO:0000303" key="3">
    <source>
    </source>
</evidence>
<evidence type="ECO:0000303" key="4">
    <source>
    </source>
</evidence>
<evidence type="ECO:0000303" key="5">
    <source>
    </source>
</evidence>
<evidence type="ECO:0000303" key="6">
    <source>
    </source>
</evidence>
<evidence type="ECO:0000303" key="7">
    <source ref="11"/>
</evidence>
<evidence type="ECO:0000303" key="8">
    <source ref="12"/>
</evidence>
<evidence type="ECO:0000305" key="9"/>
<evidence type="ECO:0000305" key="10">
    <source>
    </source>
</evidence>
<evidence type="ECO:0000305" key="11">
    <source>
    </source>
</evidence>
<evidence type="ECO:0000305" key="12">
    <source>
    </source>
</evidence>
<evidence type="ECO:0000305" key="13">
    <source>
    </source>
</evidence>
<evidence type="ECO:0007829" key="14">
    <source>
        <dbReference type="PDB" id="3C2A"/>
    </source>
</evidence>
<evidence type="ECO:0007829" key="15">
    <source>
        <dbReference type="PDB" id="4LLD"/>
    </source>
</evidence>
<evidence type="ECO:0007829" key="16">
    <source>
        <dbReference type="PDB" id="4LLY"/>
    </source>
</evidence>
<protein>
    <recommendedName>
        <fullName evidence="3 7">Immunoglobulin lambda constant 2</fullName>
    </recommendedName>
    <alternativeName>
        <fullName evidence="12">Ig lambda chain C region Kern</fullName>
    </alternativeName>
    <alternativeName>
        <fullName evidence="13">Ig lambda chain C region NIG-64</fullName>
    </alternativeName>
    <alternativeName>
        <fullName evidence="11">Ig lambda chain C region SH</fullName>
    </alternativeName>
    <alternativeName>
        <fullName evidence="10">Ig lambda chain C region X</fullName>
    </alternativeName>
    <alternativeName>
        <fullName evidence="9">Ig lambda-2 chain C region</fullName>
    </alternativeName>
</protein>
<proteinExistence type="evidence at protein level"/>
<dbReference type="EMBL" id="J00253">
    <property type="protein sequence ID" value="AAA59107.1"/>
    <property type="status" value="ALT_INIT"/>
    <property type="molecule type" value="Genomic_DNA"/>
</dbReference>
<dbReference type="EMBL" id="X51754">
    <property type="protein sequence ID" value="CAB38569.1"/>
    <property type="status" value="ALT_INIT"/>
    <property type="molecule type" value="Genomic_DNA"/>
</dbReference>
<dbReference type="EMBL" id="X51755">
    <property type="protein sequence ID" value="CAA36049.1"/>
    <property type="status" value="ALT_INIT"/>
    <property type="molecule type" value="Genomic_DNA"/>
</dbReference>
<dbReference type="EMBL" id="D87023">
    <property type="protein sequence ID" value="BAA20026.1"/>
    <property type="status" value="ALT_INIT"/>
    <property type="molecule type" value="Genomic_DNA"/>
</dbReference>
<dbReference type="EMBL" id="AC245028">
    <property type="status" value="NOT_ANNOTATED_CDS"/>
    <property type="molecule type" value="Genomic_DNA"/>
</dbReference>
<dbReference type="EMBL" id="CH471095">
    <property type="protein sequence ID" value="EAW59547.1"/>
    <property type="status" value="ALT_INIT"/>
    <property type="molecule type" value="Genomic_DNA"/>
</dbReference>
<dbReference type="EMBL" id="CH471095">
    <property type="protein sequence ID" value="EAW59549.1"/>
    <property type="status" value="ALT_INIT"/>
    <property type="molecule type" value="Genomic_DNA"/>
</dbReference>
<dbReference type="PIR" id="A92057">
    <property type="entry name" value="L2HU"/>
</dbReference>
<dbReference type="PDB" id="1JVK">
    <property type="method" value="X-ray"/>
    <property type="resolution" value="1.94 A"/>
    <property type="chains" value="B=1-105"/>
</dbReference>
<dbReference type="PDB" id="1LIL">
    <property type="method" value="X-ray"/>
    <property type="resolution" value="2.65 A"/>
    <property type="chains" value="A/B=1-106"/>
</dbReference>
<dbReference type="PDB" id="1ZVO">
    <property type="method" value="X-ray"/>
    <property type="chains" value="A/B=2-106"/>
</dbReference>
<dbReference type="PDB" id="2JB5">
    <property type="method" value="X-ray"/>
    <property type="resolution" value="2.80 A"/>
    <property type="chains" value="L=1-104"/>
</dbReference>
<dbReference type="PDB" id="2JB6">
    <property type="method" value="X-ray"/>
    <property type="resolution" value="2.85 A"/>
    <property type="chains" value="A/L=1-104"/>
</dbReference>
<dbReference type="PDB" id="3C2A">
    <property type="method" value="X-ray"/>
    <property type="resolution" value="2.10 A"/>
    <property type="chains" value="L/M=2-105"/>
</dbReference>
<dbReference type="PDB" id="3TV3">
    <property type="method" value="X-ray"/>
    <property type="resolution" value="1.29 A"/>
    <property type="chains" value="L=1-106"/>
</dbReference>
<dbReference type="PDB" id="3TWC">
    <property type="method" value="X-ray"/>
    <property type="resolution" value="1.65 A"/>
    <property type="chains" value="L=1-106"/>
</dbReference>
<dbReference type="PDB" id="3TYG">
    <property type="method" value="X-ray"/>
    <property type="resolution" value="3.25 A"/>
    <property type="chains" value="L=1-106"/>
</dbReference>
<dbReference type="PDB" id="4EOW">
    <property type="method" value="X-ray"/>
    <property type="resolution" value="1.97 A"/>
    <property type="chains" value="L=1-106"/>
</dbReference>
<dbReference type="PDB" id="4LLD">
    <property type="method" value="X-ray"/>
    <property type="resolution" value="1.19 A"/>
    <property type="chains" value="B=1-105"/>
</dbReference>
<dbReference type="PDB" id="4LLM">
    <property type="method" value="X-ray"/>
    <property type="resolution" value="1.75 A"/>
    <property type="chains" value="B=1-105"/>
</dbReference>
<dbReference type="PDB" id="4LLQ">
    <property type="method" value="X-ray"/>
    <property type="resolution" value="1.42 A"/>
    <property type="chains" value="B=1-105"/>
</dbReference>
<dbReference type="PDB" id="4LLU">
    <property type="method" value="X-ray"/>
    <property type="resolution" value="2.16 A"/>
    <property type="chains" value="B/D=1-105"/>
</dbReference>
<dbReference type="PDB" id="4LLW">
    <property type="method" value="X-ray"/>
    <property type="resolution" value="1.95 A"/>
    <property type="chains" value="B/D=1-105"/>
</dbReference>
<dbReference type="PDB" id="4LLY">
    <property type="method" value="X-ray"/>
    <property type="resolution" value="1.60 A"/>
    <property type="chains" value="B/D=1-105"/>
</dbReference>
<dbReference type="PDB" id="4O58">
    <property type="method" value="X-ray"/>
    <property type="resolution" value="2.75 A"/>
    <property type="chains" value="L=1-106"/>
</dbReference>
<dbReference type="PDB" id="4O5I">
    <property type="method" value="X-ray"/>
    <property type="resolution" value="6.50 A"/>
    <property type="chains" value="N/P/R/T/V/X=1-106"/>
</dbReference>
<dbReference type="PDB" id="5IQ7">
    <property type="method" value="X-ray"/>
    <property type="resolution" value="3.29 A"/>
    <property type="chains" value="L=1-104"/>
</dbReference>
<dbReference type="PDB" id="5IQ9">
    <property type="method" value="X-ray"/>
    <property type="resolution" value="2.40 A"/>
    <property type="chains" value="B/L=1-102"/>
</dbReference>
<dbReference type="PDB" id="6DE7">
    <property type="method" value="X-ray"/>
    <property type="resolution" value="4.12 A"/>
    <property type="chains" value="L=1-106"/>
</dbReference>
<dbReference type="PDB" id="6UMX">
    <property type="method" value="X-ray"/>
    <property type="resolution" value="2.79 A"/>
    <property type="chains" value="L/l=1-106"/>
</dbReference>
<dbReference type="PDB" id="8ECQ">
    <property type="method" value="X-ray"/>
    <property type="resolution" value="2.00 A"/>
    <property type="chains" value="L=1-106"/>
</dbReference>
<dbReference type="PDB" id="8ECV">
    <property type="method" value="X-ray"/>
    <property type="resolution" value="1.81 A"/>
    <property type="chains" value="A/L=1-106"/>
</dbReference>
<dbReference type="PDB" id="8ECZ">
    <property type="method" value="X-ray"/>
    <property type="resolution" value="2.82 A"/>
    <property type="chains" value="A/L=1-106"/>
</dbReference>
<dbReference type="PDB" id="8ED1">
    <property type="method" value="X-ray"/>
    <property type="resolution" value="2.31 A"/>
    <property type="chains" value="L=1-106"/>
</dbReference>
<dbReference type="PDB" id="8EDF">
    <property type="method" value="X-ray"/>
    <property type="resolution" value="3.40 A"/>
    <property type="chains" value="L=1-106"/>
</dbReference>
<dbReference type="PDB" id="8XLC">
    <property type="method" value="NMR"/>
    <property type="chains" value="A=2-104"/>
</dbReference>
<dbReference type="PDBsum" id="1JVK"/>
<dbReference type="PDBsum" id="1LIL"/>
<dbReference type="PDBsum" id="1ZVO"/>
<dbReference type="PDBsum" id="2JB5"/>
<dbReference type="PDBsum" id="2JB6"/>
<dbReference type="PDBsum" id="3C2A"/>
<dbReference type="PDBsum" id="3TV3"/>
<dbReference type="PDBsum" id="3TWC"/>
<dbReference type="PDBsum" id="3TYG"/>
<dbReference type="PDBsum" id="4EOW"/>
<dbReference type="PDBsum" id="4LLD"/>
<dbReference type="PDBsum" id="4LLM"/>
<dbReference type="PDBsum" id="4LLQ"/>
<dbReference type="PDBsum" id="4LLU"/>
<dbReference type="PDBsum" id="4LLW"/>
<dbReference type="PDBsum" id="4LLY"/>
<dbReference type="PDBsum" id="4O58"/>
<dbReference type="PDBsum" id="4O5I"/>
<dbReference type="PDBsum" id="5IQ7"/>
<dbReference type="PDBsum" id="5IQ9"/>
<dbReference type="PDBsum" id="6DE7"/>
<dbReference type="PDBsum" id="6UMX"/>
<dbReference type="PDBsum" id="8ECQ"/>
<dbReference type="PDBsum" id="8ECV"/>
<dbReference type="PDBsum" id="8ECZ"/>
<dbReference type="PDBsum" id="8ED1"/>
<dbReference type="PDBsum" id="8EDF"/>
<dbReference type="PDBsum" id="8XLC"/>
<dbReference type="SMR" id="P0DOY2"/>
<dbReference type="FunCoup" id="P0DOY2">
    <property type="interactions" value="258"/>
</dbReference>
<dbReference type="IMGT_GENE-DB" id="IGLC2"/>
<dbReference type="CarbonylDB" id="P0DOY2"/>
<dbReference type="GlyGen" id="P0DOY2">
    <property type="glycosylation" value="1 site"/>
</dbReference>
<dbReference type="BioMuta" id="IGLC2"/>
<dbReference type="jPOST" id="P0DOY2"/>
<dbReference type="MassIVE" id="P0DOY2"/>
<dbReference type="PeptideAtlas" id="P0DOY2"/>
<dbReference type="PRIDE" id="P0DOY2"/>
<dbReference type="Pumba" id="P0DOY2"/>
<dbReference type="Ensembl" id="ENST00000390323.2">
    <property type="protein sequence ID" value="ENSP00000374856.2"/>
    <property type="gene ID" value="ENSG00000211677.2"/>
</dbReference>
<dbReference type="AGR" id="HGNC:5856"/>
<dbReference type="GeneCards" id="IGLC2"/>
<dbReference type="HGNC" id="HGNC:5856">
    <property type="gene designation" value="IGLC2"/>
</dbReference>
<dbReference type="HPA" id="ENSG00000211677">
    <property type="expression patterns" value="Tissue enhanced (intestine, lymphoid tissue, stomach)"/>
</dbReference>
<dbReference type="neXtProt" id="NX_P0DOY2"/>
<dbReference type="VEuPathDB" id="HostDB:ENSG00000211677"/>
<dbReference type="InParanoid" id="P0DOY2"/>
<dbReference type="OrthoDB" id="9049585at2759"/>
<dbReference type="PAN-GO" id="P0DOY2">
    <property type="GO annotations" value="11 GO annotations based on evolutionary models"/>
</dbReference>
<dbReference type="PathwayCommons" id="P0DOY2"/>
<dbReference type="Reactome" id="R-HSA-166663">
    <property type="pathway name" value="Initial triggering of complement"/>
</dbReference>
<dbReference type="Reactome" id="R-HSA-173623">
    <property type="pathway name" value="Classical antibody-mediated complement activation"/>
</dbReference>
<dbReference type="Reactome" id="R-HSA-198933">
    <property type="pathway name" value="Immunoregulatory interactions between a Lymphoid and a non-Lymphoid cell"/>
</dbReference>
<dbReference type="Reactome" id="R-HSA-202733">
    <property type="pathway name" value="Cell surface interactions at the vascular wall"/>
</dbReference>
<dbReference type="Reactome" id="R-HSA-2029481">
    <property type="pathway name" value="FCGR activation"/>
</dbReference>
<dbReference type="Reactome" id="R-HSA-2029482">
    <property type="pathway name" value="Regulation of actin dynamics for phagocytic cup formation"/>
</dbReference>
<dbReference type="Reactome" id="R-HSA-2029485">
    <property type="pathway name" value="Role of phospholipids in phagocytosis"/>
</dbReference>
<dbReference type="Reactome" id="R-HSA-2168880">
    <property type="pathway name" value="Scavenging of heme from plasma"/>
</dbReference>
<dbReference type="Reactome" id="R-HSA-2454202">
    <property type="pathway name" value="Fc epsilon receptor (FCERI) signaling"/>
</dbReference>
<dbReference type="Reactome" id="R-HSA-2730905">
    <property type="pathway name" value="Role of LAT2/NTAL/LAB on calcium mobilization"/>
</dbReference>
<dbReference type="Reactome" id="R-HSA-2871796">
    <property type="pathway name" value="FCERI mediated MAPK activation"/>
</dbReference>
<dbReference type="Reactome" id="R-HSA-2871809">
    <property type="pathway name" value="FCERI mediated Ca+2 mobilization"/>
</dbReference>
<dbReference type="Reactome" id="R-HSA-2871837">
    <property type="pathway name" value="FCERI mediated NF-kB activation"/>
</dbReference>
<dbReference type="Reactome" id="R-HSA-5690714">
    <property type="pathway name" value="CD22 mediated BCR regulation"/>
</dbReference>
<dbReference type="Reactome" id="R-HSA-9664323">
    <property type="pathway name" value="FCGR3A-mediated IL10 synthesis"/>
</dbReference>
<dbReference type="Reactome" id="R-HSA-9664422">
    <property type="pathway name" value="FCGR3A-mediated phagocytosis"/>
</dbReference>
<dbReference type="Reactome" id="R-HSA-9679191">
    <property type="pathway name" value="Potential therapeutics for SARS"/>
</dbReference>
<dbReference type="Reactome" id="R-HSA-977606">
    <property type="pathway name" value="Regulation of Complement cascade"/>
</dbReference>
<dbReference type="Reactome" id="R-HSA-983695">
    <property type="pathway name" value="Antigen activates B Cell Receptor (BCR) leading to generation of second messengers"/>
</dbReference>
<dbReference type="CD-CODE" id="232F8A39">
    <property type="entry name" value="P-body"/>
</dbReference>
<dbReference type="ChiTaRS" id="IGLC2">
    <property type="organism name" value="human"/>
</dbReference>
<dbReference type="EvolutionaryTrace" id="P0DOY2"/>
<dbReference type="Pharos" id="P0DOY2">
    <property type="development level" value="Tdark"/>
</dbReference>
<dbReference type="PRO" id="PR:P0DOY2"/>
<dbReference type="Proteomes" id="UP000005640">
    <property type="component" value="Chromosome 22"/>
</dbReference>
<dbReference type="RNAct" id="P0DOY2">
    <property type="molecule type" value="protein"/>
</dbReference>
<dbReference type="Bgee" id="ENSG00000211677">
    <property type="expression patterns" value="Expressed in duodenum and 93 other cell types or tissues"/>
</dbReference>
<dbReference type="GO" id="GO:0072562">
    <property type="term" value="C:blood microparticle"/>
    <property type="evidence" value="ECO:0007005"/>
    <property type="project" value="UniProtKB"/>
</dbReference>
<dbReference type="GO" id="GO:0070062">
    <property type="term" value="C:extracellular exosome"/>
    <property type="evidence" value="ECO:0007005"/>
    <property type="project" value="UniProtKB"/>
</dbReference>
<dbReference type="GO" id="GO:0005576">
    <property type="term" value="C:extracellular region"/>
    <property type="evidence" value="ECO:0000304"/>
    <property type="project" value="Reactome"/>
</dbReference>
<dbReference type="GO" id="GO:0005615">
    <property type="term" value="C:extracellular space"/>
    <property type="evidence" value="ECO:0007005"/>
    <property type="project" value="UniProtKB"/>
</dbReference>
<dbReference type="GO" id="GO:0071735">
    <property type="term" value="C:IgG immunoglobulin complex"/>
    <property type="evidence" value="ECO:0000318"/>
    <property type="project" value="GO_Central"/>
</dbReference>
<dbReference type="GO" id="GO:0005886">
    <property type="term" value="C:plasma membrane"/>
    <property type="evidence" value="ECO:0000304"/>
    <property type="project" value="Reactome"/>
</dbReference>
<dbReference type="GO" id="GO:0003823">
    <property type="term" value="F:antigen binding"/>
    <property type="evidence" value="ECO:0000318"/>
    <property type="project" value="GO_Central"/>
</dbReference>
<dbReference type="GO" id="GO:0016064">
    <property type="term" value="P:immunoglobulin mediated immune response"/>
    <property type="evidence" value="ECO:0000318"/>
    <property type="project" value="GO_Central"/>
</dbReference>
<dbReference type="CDD" id="cd07699">
    <property type="entry name" value="IgC1_L"/>
    <property type="match status" value="1"/>
</dbReference>
<dbReference type="FunFam" id="2.60.40.10:FF:000283">
    <property type="entry name" value="Immunoglobulin kappa constant"/>
    <property type="match status" value="1"/>
</dbReference>
<dbReference type="Gene3D" id="2.60.40.10">
    <property type="entry name" value="Immunoglobulins"/>
    <property type="match status" value="1"/>
</dbReference>
<dbReference type="InterPro" id="IPR007110">
    <property type="entry name" value="Ig-like_dom"/>
</dbReference>
<dbReference type="InterPro" id="IPR036179">
    <property type="entry name" value="Ig-like_dom_sf"/>
</dbReference>
<dbReference type="InterPro" id="IPR013783">
    <property type="entry name" value="Ig-like_fold"/>
</dbReference>
<dbReference type="InterPro" id="IPR003006">
    <property type="entry name" value="Ig/MHC_CS"/>
</dbReference>
<dbReference type="InterPro" id="IPR003597">
    <property type="entry name" value="Ig_C1-set"/>
</dbReference>
<dbReference type="InterPro" id="IPR050160">
    <property type="entry name" value="MHC/Immunoglobulin"/>
</dbReference>
<dbReference type="PANTHER" id="PTHR19944:SF98">
    <property type="entry name" value="IG-LIKE DOMAIN-CONTAINING PROTEIN"/>
    <property type="match status" value="1"/>
</dbReference>
<dbReference type="PANTHER" id="PTHR19944">
    <property type="entry name" value="MHC CLASS II-RELATED"/>
    <property type="match status" value="1"/>
</dbReference>
<dbReference type="Pfam" id="PF07654">
    <property type="entry name" value="C1-set"/>
    <property type="match status" value="1"/>
</dbReference>
<dbReference type="SMART" id="SM00407">
    <property type="entry name" value="IGc1"/>
    <property type="match status" value="1"/>
</dbReference>
<dbReference type="SUPFAM" id="SSF48726">
    <property type="entry name" value="Immunoglobulin"/>
    <property type="match status" value="1"/>
</dbReference>
<dbReference type="PROSITE" id="PS50835">
    <property type="entry name" value="IG_LIKE"/>
    <property type="match status" value="1"/>
</dbReference>
<dbReference type="PROSITE" id="PS00290">
    <property type="entry name" value="IG_MHC"/>
    <property type="match status" value="1"/>
</dbReference>
<reference key="1">
    <citation type="journal article" date="1968" name="Biochem. J.">
        <title>Immunoglobulin lambda-chains. The complete amino acid sequence of a Bence-Jones protein.</title>
        <authorList>
            <person name="Milstein C."/>
            <person name="Clegg J.B."/>
            <person name="Jarvis J.M."/>
        </authorList>
    </citation>
    <scope>PROTEIN SEQUENCE</scope>
    <scope>DISULFIDE BONDS</scope>
</reference>
<reference key="2">
    <citation type="journal article" date="1970" name="J. Biol. Chem.">
        <title>The amino acid sequence of a lambda type Bence-Jones protein. 3. The complete amino acid sequence and the location of the disulfide bridges.</title>
        <authorList>
            <person name="Titani K."/>
            <person name="Wikler M."/>
            <person name="Shinoda T."/>
            <person name="Putnam F.W."/>
        </authorList>
    </citation>
    <scope>PROTEIN SEQUENCE</scope>
</reference>
<reference key="3">
    <citation type="journal article" date="1971" name="Hoppe-Seyler's Z. Physiol. Chem.">
        <title>Structural rule of antibodies. Primary structure of a monoclonal immunoglobulin-L-chain of the lambda type, subgroup IV (Bence-Jones-protein Kern). V. The complete amino acid sequence and its genetic interpretation.</title>
        <authorList>
            <person name="Ponstingl H."/>
            <person name="Hess M."/>
            <person name="Hilschmann N."/>
        </authorList>
    </citation>
    <scope>PROTEIN SEQUENCE</scope>
</reference>
<reference key="4">
    <citation type="journal article" date="1981" name="Nature">
        <title>Clustered arrangement of immunoglobulin lambda constant region genes in man.</title>
        <authorList>
            <person name="Hieter P.A."/>
            <person name="Hollis G.F."/>
            <person name="Korsmeyer S.J."/>
            <person name="Waldmann T.A."/>
            <person name="Leder P."/>
        </authorList>
    </citation>
    <scope>NUCLEOTIDE SEQUENCE [GENOMIC DNA] (IMGT ALLELE IGLC2*01)</scope>
</reference>
<reference key="5">
    <citation type="journal article" date="1983" name="J. Biochem.">
        <title>Comparative studies on the structure of the light chains of human immunoglobulins. IV. Assignment of a subsubgroup.</title>
        <authorList>
            <person name="Kametani F."/>
            <person name="Takayasu T."/>
            <person name="Suzuki S."/>
            <person name="Shinoda T."/>
            <person name="Okuyama T."/>
            <person name="Shimizu A."/>
        </authorList>
    </citation>
    <scope>PROTEIN SEQUENCE</scope>
</reference>
<reference key="6">
    <citation type="journal article" date="1990" name="J. Exp. Med.">
        <title>Structure and expression of the human immunoglobulin lambda genes.</title>
        <authorList>
            <person name="Vasicek T.J."/>
            <person name="Leder P."/>
        </authorList>
    </citation>
    <scope>NUCLEOTIDE SEQUENCE [GENOMIC DNA] (IMGT ALLELE IGLC2*02)</scope>
</reference>
<reference key="7">
    <citation type="journal article" date="1997" name="Genome Res.">
        <title>One-megabase sequence analysis of the human immunoglobulin lambda gene locus.</title>
        <authorList>
            <person name="Kawasaki K."/>
            <person name="Minoshima S."/>
            <person name="Nakato E."/>
            <person name="Shibuya K."/>
            <person name="Shintani A."/>
            <person name="Schmeits J.L."/>
            <person name="Wang J."/>
            <person name="Shimizu N."/>
        </authorList>
    </citation>
    <scope>NUCLEOTIDE SEQUENCE [GENOMIC DNA] (IMGT ALLELE IGLC2*02)</scope>
</reference>
<reference key="8">
    <citation type="journal article" date="1999" name="Nature">
        <title>The DNA sequence of human chromosome 22.</title>
        <authorList>
            <person name="Dunham I."/>
            <person name="Hunt A.R."/>
            <person name="Collins J.E."/>
            <person name="Bruskiewich R."/>
            <person name="Beare D.M."/>
            <person name="Clamp M."/>
            <person name="Smink L.J."/>
            <person name="Ainscough R."/>
            <person name="Almeida J.P."/>
            <person name="Babbage A.K."/>
            <person name="Bagguley C."/>
            <person name="Bailey J."/>
            <person name="Barlow K.F."/>
            <person name="Bates K.N."/>
            <person name="Beasley O.P."/>
            <person name="Bird C.P."/>
            <person name="Blakey S.E."/>
            <person name="Bridgeman A.M."/>
            <person name="Buck D."/>
            <person name="Burgess J."/>
            <person name="Burrill W.D."/>
            <person name="Burton J."/>
            <person name="Carder C."/>
            <person name="Carter N.P."/>
            <person name="Chen Y."/>
            <person name="Clark G."/>
            <person name="Clegg S.M."/>
            <person name="Cobley V.E."/>
            <person name="Cole C.G."/>
            <person name="Collier R.E."/>
            <person name="Connor R."/>
            <person name="Conroy D."/>
            <person name="Corby N.R."/>
            <person name="Coville G.J."/>
            <person name="Cox A.V."/>
            <person name="Davis J."/>
            <person name="Dawson E."/>
            <person name="Dhami P.D."/>
            <person name="Dockree C."/>
            <person name="Dodsworth S.J."/>
            <person name="Durbin R.M."/>
            <person name="Ellington A.G."/>
            <person name="Evans K.L."/>
            <person name="Fey J.M."/>
            <person name="Fleming K."/>
            <person name="French L."/>
            <person name="Garner A.A."/>
            <person name="Gilbert J.G.R."/>
            <person name="Goward M.E."/>
            <person name="Grafham D.V."/>
            <person name="Griffiths M.N.D."/>
            <person name="Hall C."/>
            <person name="Hall R.E."/>
            <person name="Hall-Tamlyn G."/>
            <person name="Heathcott R.W."/>
            <person name="Ho S."/>
            <person name="Holmes S."/>
            <person name="Hunt S.E."/>
            <person name="Jones M.C."/>
            <person name="Kershaw J."/>
            <person name="Kimberley A.M."/>
            <person name="King A."/>
            <person name="Laird G.K."/>
            <person name="Langford C.F."/>
            <person name="Leversha M.A."/>
            <person name="Lloyd C."/>
            <person name="Lloyd D.M."/>
            <person name="Martyn I.D."/>
            <person name="Mashreghi-Mohammadi M."/>
            <person name="Matthews L.H."/>
            <person name="Mccann O.T."/>
            <person name="Mcclay J."/>
            <person name="Mclaren S."/>
            <person name="McMurray A.A."/>
            <person name="Milne S.A."/>
            <person name="Mortimore B.J."/>
            <person name="Odell C.N."/>
            <person name="Pavitt R."/>
            <person name="Pearce A.V."/>
            <person name="Pearson D."/>
            <person name="Phillimore B.J.C.T."/>
            <person name="Phillips S.H."/>
            <person name="Plumb R.W."/>
            <person name="Ramsay H."/>
            <person name="Ramsey Y."/>
            <person name="Rogers L."/>
            <person name="Ross M.T."/>
            <person name="Scott C.E."/>
            <person name="Sehra H.K."/>
            <person name="Skuce C.D."/>
            <person name="Smalley S."/>
            <person name="Smith M.L."/>
            <person name="Soderlund C."/>
            <person name="Spragon L."/>
            <person name="Steward C.A."/>
            <person name="Sulston J.E."/>
            <person name="Swann R.M."/>
            <person name="Vaudin M."/>
            <person name="Wall M."/>
            <person name="Wallis J.M."/>
            <person name="Whiteley M.N."/>
            <person name="Willey D.L."/>
            <person name="Williams L."/>
            <person name="Williams S.A."/>
            <person name="Williamson H."/>
            <person name="Wilmer T.E."/>
            <person name="Wilming L."/>
            <person name="Wright C.L."/>
            <person name="Hubbard T."/>
            <person name="Bentley D.R."/>
            <person name="Beck S."/>
            <person name="Rogers J."/>
            <person name="Shimizu N."/>
            <person name="Minoshima S."/>
            <person name="Kawasaki K."/>
            <person name="Sasaki T."/>
            <person name="Asakawa S."/>
            <person name="Kudoh J."/>
            <person name="Shintani A."/>
            <person name="Shibuya K."/>
            <person name="Yoshizaki Y."/>
            <person name="Aoki N."/>
            <person name="Mitsuyama S."/>
            <person name="Roe B.A."/>
            <person name="Chen F."/>
            <person name="Chu L."/>
            <person name="Crabtree J."/>
            <person name="Deschamps S."/>
            <person name="Do A."/>
            <person name="Do T."/>
            <person name="Dorman A."/>
            <person name="Fang F."/>
            <person name="Fu Y."/>
            <person name="Hu P."/>
            <person name="Hua A."/>
            <person name="Kenton S."/>
            <person name="Lai H."/>
            <person name="Lao H.I."/>
            <person name="Lewis J."/>
            <person name="Lewis S."/>
            <person name="Lin S.-P."/>
            <person name="Loh P."/>
            <person name="Malaj E."/>
            <person name="Nguyen T."/>
            <person name="Pan H."/>
            <person name="Phan S."/>
            <person name="Qi S."/>
            <person name="Qian Y."/>
            <person name="Ray L."/>
            <person name="Ren Q."/>
            <person name="Shaull S."/>
            <person name="Sloan D."/>
            <person name="Song L."/>
            <person name="Wang Q."/>
            <person name="Wang Y."/>
            <person name="Wang Z."/>
            <person name="White J."/>
            <person name="Willingham D."/>
            <person name="Wu H."/>
            <person name="Yao Z."/>
            <person name="Zhan M."/>
            <person name="Zhang G."/>
            <person name="Chissoe S."/>
            <person name="Murray J."/>
            <person name="Miller N."/>
            <person name="Minx P."/>
            <person name="Fulton R."/>
            <person name="Johnson D."/>
            <person name="Bemis G."/>
            <person name="Bentley D."/>
            <person name="Bradshaw H."/>
            <person name="Bourne S."/>
            <person name="Cordes M."/>
            <person name="Du Z."/>
            <person name="Fulton L."/>
            <person name="Goela D."/>
            <person name="Graves T."/>
            <person name="Hawkins J."/>
            <person name="Hinds K."/>
            <person name="Kemp K."/>
            <person name="Latreille P."/>
            <person name="Layman D."/>
            <person name="Ozersky P."/>
            <person name="Rohlfing T."/>
            <person name="Scheet P."/>
            <person name="Walker C."/>
            <person name="Wamsley A."/>
            <person name="Wohldmann P."/>
            <person name="Pepin K."/>
            <person name="Nelson J."/>
            <person name="Korf I."/>
            <person name="Bedell J.A."/>
            <person name="Hillier L.W."/>
            <person name="Mardis E."/>
            <person name="Waterston R."/>
            <person name="Wilson R."/>
            <person name="Emanuel B.S."/>
            <person name="Shaikh T."/>
            <person name="Kurahashi H."/>
            <person name="Saitta S."/>
            <person name="Budarf M.L."/>
            <person name="McDermid H.E."/>
            <person name="Johnson A."/>
            <person name="Wong A.C.C."/>
            <person name="Morrow B.E."/>
            <person name="Edelmann L."/>
            <person name="Kim U.J."/>
            <person name="Shizuya H."/>
            <person name="Simon M.I."/>
            <person name="Dumanski J.P."/>
            <person name="Peyrard M."/>
            <person name="Kedra D."/>
            <person name="Seroussi E."/>
            <person name="Fransson I."/>
            <person name="Tapia I."/>
            <person name="Bruder C.E."/>
            <person name="O'Brien K.P."/>
            <person name="Wilkinson P."/>
            <person name="Bodenteich A."/>
            <person name="Hartman K."/>
            <person name="Hu X."/>
            <person name="Khan A.S."/>
            <person name="Lane L."/>
            <person name="Tilahun Y."/>
            <person name="Wright H."/>
        </authorList>
    </citation>
    <scope>NUCLEOTIDE SEQUENCE [LARGE SCALE GENOMIC DNA] (IMGT ALLELE IGLC2*02)</scope>
</reference>
<reference key="9">
    <citation type="submission" date="2005-07" db="EMBL/GenBank/DDBJ databases">
        <authorList>
            <person name="Mural R.J."/>
            <person name="Istrail S."/>
            <person name="Sutton G.G."/>
            <person name="Florea L."/>
            <person name="Halpern A.L."/>
            <person name="Mobarry C.M."/>
            <person name="Lippert R."/>
            <person name="Walenz B."/>
            <person name="Shatkay H."/>
            <person name="Dew I."/>
            <person name="Miller J.R."/>
            <person name="Flanigan M.J."/>
            <person name="Edwards N.J."/>
            <person name="Bolanos R."/>
            <person name="Fasulo D."/>
            <person name="Halldorsson B.V."/>
            <person name="Hannenhalli S."/>
            <person name="Turner R."/>
            <person name="Yooseph S."/>
            <person name="Lu F."/>
            <person name="Nusskern D.R."/>
            <person name="Shue B.C."/>
            <person name="Zheng X.H."/>
            <person name="Zhong F."/>
            <person name="Delcher A.L."/>
            <person name="Huson D.H."/>
            <person name="Kravitz S.A."/>
            <person name="Mouchard L."/>
            <person name="Reinert K."/>
            <person name="Remington K.A."/>
            <person name="Clark A.G."/>
            <person name="Waterman M.S."/>
            <person name="Eichler E.E."/>
            <person name="Adams M.D."/>
            <person name="Hunkapiller M.W."/>
            <person name="Myers E.W."/>
            <person name="Venter J.C."/>
        </authorList>
    </citation>
    <scope>NUCLEOTIDE SEQUENCE [LARGE SCALE GENOMIC DNA] (IMGT ALLELE IGLC2*02)</scope>
</reference>
<reference key="10">
    <citation type="journal article" date="2001" name="Exp. Clin. Immunogenet.">
        <title>Nomenclature of the human immunoglobulin lambda (IGL) genes.</title>
        <authorList>
            <person name="Lefranc M.P."/>
        </authorList>
    </citation>
    <scope>NOMENCLATURE</scope>
</reference>
<reference key="11">
    <citation type="book" date="2001" name="The Immunoglobulin FactsBook.">
        <title>The Immunoglobulin FactsBook.</title>
        <editorList>
            <person name="Lefranc M.P."/>
            <person name="Lefranc G."/>
        </editorList>
        <authorList>
            <person name="Lefranc M.P."/>
            <person name="Lefranc G."/>
        </authorList>
    </citation>
    <scope>NOMENCLATURE</scope>
</reference>
<reference key="12">
    <citation type="book" date="2004" name="Molecular Biology of B Cells">
        <title>Immunoglobulin lambda (IGL) genes of human and mouse.</title>
        <editorList>
            <person name="Honjo T."/>
            <person name="Alt F.W."/>
            <person name="Neuberger M."/>
        </editorList>
        <authorList>
            <person name="Lefranc M.-P."/>
            <person name="Lefranc G."/>
        </authorList>
    </citation>
    <scope>SEROLOGICAL ISOTYPE</scope>
</reference>
<reference key="13">
    <citation type="journal article" date="2007" name="Annu. Rev. Genet.">
        <title>Immunoglobulin somatic hypermutation.</title>
        <authorList>
            <person name="Teng G."/>
            <person name="Papavasiliou F.N."/>
        </authorList>
    </citation>
    <scope>REVIEW ON SOMATIC HYPERMUTATION</scope>
</reference>
<reference key="14">
    <citation type="journal article" date="2010" name="J. Allergy Clin. Immunol.">
        <title>Structure and function of immunoglobulins.</title>
        <authorList>
            <person name="Schroeder H.W. Jr."/>
            <person name="Cavacini L."/>
        </authorList>
    </citation>
    <scope>REVIEW ON IMMUNOGLOBULINS</scope>
</reference>
<reference key="15">
    <citation type="journal article" date="2012" name="Nat. Rev. Immunol.">
        <title>Molecular programming of B cell memory.</title>
        <authorList>
            <person name="McHeyzer-Williams M."/>
            <person name="Okitsu S."/>
            <person name="Wang N."/>
            <person name="McHeyzer-Williams L."/>
        </authorList>
    </citation>
    <scope>REVIEW ON FUNCTION</scope>
</reference>
<sequence>GQPKAAPSVTLFPPSSEELQANKATLVCLISDFYPGAVTVAWKADSSPVKAGVETTTPSKQSNNKYAASSYLSLTPEQWKSHRSYSCQVTHEGSTVEKTVAPTECS</sequence>
<gene>
    <name evidence="3 7" type="primary">IGLC2</name>
</gene>
<comment type="function">
    <text evidence="4 5 6">Constant region of immunoglobulin light chains. Immunoglobulins, also known as antibodies, are membrane-bound or secreted glycoproteins produced by B lymphocytes. In the recognition phase of humoral immunity, the membrane-bound immunoglobulins serve as receptors which, upon binding of a specific antigen, trigger the clonal expansion and differentiation of B lymphocytes into immunoglobulins-secreting plasma cells. Secreted immunoglobulins mediate the effector phase of humoral immunity, which results in the elimination of bound antigens (PubMed:20176268, PubMed:22158414). The antigen binding site is formed by the variable domain of one heavy chain, together with that of its associated light chain. Thus, each immunoglobulin has two antigen binding sites with remarkable affinity for a particular antigen. The variable domains are assembled by a process called V-(D)-J rearrangement and can then be subjected to somatic hypermutations which, after exposure to antigen and selection, allow affinity maturation for a particular antigen (PubMed:17576170, PubMed:20176268).</text>
</comment>
<comment type="subunit">
    <text evidence="5">Immunoglobulins are composed of two identical heavy chains and two identical light chains; disulfide-linked.</text>
</comment>
<comment type="subcellular location">
    <subcellularLocation>
        <location evidence="5 6">Secreted</location>
    </subcellularLocation>
    <subcellularLocation>
        <location evidence="5 6">Cell membrane</location>
    </subcellularLocation>
</comment>
<comment type="polymorphism">
    <text evidence="9">There are several alleles. The sequence shown is that of IMGT allele IGLC2*02.</text>
</comment>
<comment type="miscellaneous">
    <text evidence="8">Displays the following serological isotype: Mcg-, Kern- and Oz-. The Mcg- isotype marker is characterized by Ala-6, Ser-8 and Thr-57; the Ke- marker by Ser-46 and the Oz- marker by Arg-83.</text>
</comment>
<comment type="caution">
    <text evidence="9">For an example of a full-length immunoglobulin lambda light chain see AC P0DOX8.</text>
</comment>
<comment type="sequence caution" evidence="9">
    <conflict type="erroneous initiation">
        <sequence resource="EMBL-CDS" id="AAA59107"/>
    </conflict>
    <text>Truncated N-terminus.</text>
</comment>
<comment type="sequence caution" evidence="9">
    <conflict type="erroneous initiation">
        <sequence resource="EMBL-CDS" id="BAA20026"/>
    </conflict>
    <text>Truncated N-terminus.</text>
</comment>
<comment type="sequence caution" evidence="9">
    <conflict type="erroneous initiation">
        <sequence resource="EMBL-CDS" id="CAA36049"/>
    </conflict>
    <text>Truncated N-terminus.</text>
</comment>
<comment type="sequence caution" evidence="9">
    <conflict type="erroneous initiation">
        <sequence resource="EMBL-CDS" id="CAB38569"/>
    </conflict>
    <text>Extended N-terminus.</text>
</comment>
<comment type="sequence caution" evidence="9">
    <conflict type="erroneous initiation">
        <sequence resource="EMBL-CDS" id="EAW59547"/>
    </conflict>
    <text>Truncated N-terminus.</text>
</comment>
<comment type="sequence caution" evidence="9">
    <conflict type="erroneous initiation">
        <sequence resource="EMBL-CDS" id="EAW59549"/>
    </conflict>
    <text>Truncated N-terminus.</text>
</comment>